<protein>
    <recommendedName>
        <fullName evidence="1">tRNA modification GTPase MnmE</fullName>
        <ecNumber evidence="1">3.6.-.-</ecNumber>
    </recommendedName>
</protein>
<reference key="1">
    <citation type="journal article" date="2007" name="PLoS ONE">
        <title>Complete genomic characterization of a pathogenic A.II strain of Francisella tularensis subspecies tularensis.</title>
        <authorList>
            <person name="Beckstrom-Sternberg S.M."/>
            <person name="Auerbach R.K."/>
            <person name="Godbole S."/>
            <person name="Pearson J.V."/>
            <person name="Beckstrom-Sternberg J.S."/>
            <person name="Deng Z."/>
            <person name="Munk C."/>
            <person name="Kubota K."/>
            <person name="Zhou Y."/>
            <person name="Bruce D."/>
            <person name="Noronha J."/>
            <person name="Scheuermann R.H."/>
            <person name="Wang A."/>
            <person name="Wei X."/>
            <person name="Wang J."/>
            <person name="Hao J."/>
            <person name="Wagner D.M."/>
            <person name="Brettin T.S."/>
            <person name="Brown N."/>
            <person name="Gilna P."/>
            <person name="Keim P.S."/>
        </authorList>
    </citation>
    <scope>NUCLEOTIDE SEQUENCE [LARGE SCALE GENOMIC DNA]</scope>
    <source>
        <strain>WY96-3418</strain>
    </source>
</reference>
<sequence>MYTKDTIVAIATPQGNGGIGIIRISGIDALAIAEKLTKKQLKPRYATFCNVYNDNEIIDHGIVIFFKAPLSYTGEDVVEIQAHGNPFILNLIIKAALNCGARMAKAGEFTERAFLNNKLDLAQAEAVADIINASSEIAAKSAAKSLQGDFSKEINNLLEKLIYLRMYVEASIDFPEEEINFLEDQKIHSSLEEIYKVILAVKNSCKQGVILAEGITLILVGKPNAGKSSLLNALAGKESAIVTSIAGTTRDIVKEHIQINGVPMHIIDTAGLRNSDDIIESEGIKRAIKKIQEADQVLFVTDDYTNSQVKFSDIKEIIPEFYDQIPKDIDITYVHNKIDLLKEVPHNHANHIYISAENNIGIDKLKEHILNKVGYTNQNESIYTARERHVTAINNAFEHIKLAREQLELGNGELLAEELLIVQEYLNSITGEFSSDDLLGEIFSSFCIGK</sequence>
<name>MNME_FRATW</name>
<comment type="function">
    <text evidence="1">Exhibits a very high intrinsic GTPase hydrolysis rate. Involved in the addition of a carboxymethylaminomethyl (cmnm) group at the wobble position (U34) of certain tRNAs, forming tRNA-cmnm(5)s(2)U34.</text>
</comment>
<comment type="cofactor">
    <cofactor evidence="1">
        <name>K(+)</name>
        <dbReference type="ChEBI" id="CHEBI:29103"/>
    </cofactor>
    <text evidence="1">Binds 1 potassium ion per subunit.</text>
</comment>
<comment type="subunit">
    <text evidence="1">Homodimer. Heterotetramer of two MnmE and two MnmG subunits.</text>
</comment>
<comment type="subcellular location">
    <subcellularLocation>
        <location evidence="1">Cytoplasm</location>
    </subcellularLocation>
</comment>
<comment type="similarity">
    <text evidence="1">Belongs to the TRAFAC class TrmE-Era-EngA-EngB-Septin-like GTPase superfamily. TrmE GTPase family.</text>
</comment>
<gene>
    <name evidence="1" type="primary">mnmE</name>
    <name evidence="1" type="synonym">trmE</name>
    <name type="ordered locus">FTW_0557</name>
</gene>
<evidence type="ECO:0000255" key="1">
    <source>
        <dbReference type="HAMAP-Rule" id="MF_00379"/>
    </source>
</evidence>
<dbReference type="EC" id="3.6.-.-" evidence="1"/>
<dbReference type="EMBL" id="CP000608">
    <property type="protein sequence ID" value="ABO46466.1"/>
    <property type="molecule type" value="Genomic_DNA"/>
</dbReference>
<dbReference type="RefSeq" id="WP_003025443.1">
    <property type="nucleotide sequence ID" value="NC_009257.1"/>
</dbReference>
<dbReference type="SMR" id="A4IX14"/>
<dbReference type="KEGG" id="ftw:FTW_0557"/>
<dbReference type="HOGENOM" id="CLU_019624_4_1_6"/>
<dbReference type="GO" id="GO:0005829">
    <property type="term" value="C:cytosol"/>
    <property type="evidence" value="ECO:0007669"/>
    <property type="project" value="TreeGrafter"/>
</dbReference>
<dbReference type="GO" id="GO:0005525">
    <property type="term" value="F:GTP binding"/>
    <property type="evidence" value="ECO:0007669"/>
    <property type="project" value="UniProtKB-UniRule"/>
</dbReference>
<dbReference type="GO" id="GO:0003924">
    <property type="term" value="F:GTPase activity"/>
    <property type="evidence" value="ECO:0007669"/>
    <property type="project" value="UniProtKB-UniRule"/>
</dbReference>
<dbReference type="GO" id="GO:0046872">
    <property type="term" value="F:metal ion binding"/>
    <property type="evidence" value="ECO:0007669"/>
    <property type="project" value="UniProtKB-KW"/>
</dbReference>
<dbReference type="GO" id="GO:0030488">
    <property type="term" value="P:tRNA methylation"/>
    <property type="evidence" value="ECO:0007669"/>
    <property type="project" value="TreeGrafter"/>
</dbReference>
<dbReference type="GO" id="GO:0002098">
    <property type="term" value="P:tRNA wobble uridine modification"/>
    <property type="evidence" value="ECO:0007669"/>
    <property type="project" value="TreeGrafter"/>
</dbReference>
<dbReference type="CDD" id="cd04164">
    <property type="entry name" value="trmE"/>
    <property type="match status" value="1"/>
</dbReference>
<dbReference type="CDD" id="cd14858">
    <property type="entry name" value="TrmE_N"/>
    <property type="match status" value="1"/>
</dbReference>
<dbReference type="Gene3D" id="3.40.50.300">
    <property type="entry name" value="P-loop containing nucleotide triphosphate hydrolases"/>
    <property type="match status" value="1"/>
</dbReference>
<dbReference type="Gene3D" id="3.30.1360.120">
    <property type="entry name" value="Probable tRNA modification gtpase trme, domain 1"/>
    <property type="match status" value="1"/>
</dbReference>
<dbReference type="Gene3D" id="1.20.120.430">
    <property type="entry name" value="tRNA modification GTPase MnmE domain 2"/>
    <property type="match status" value="1"/>
</dbReference>
<dbReference type="HAMAP" id="MF_00379">
    <property type="entry name" value="GTPase_MnmE"/>
    <property type="match status" value="1"/>
</dbReference>
<dbReference type="InterPro" id="IPR031168">
    <property type="entry name" value="G_TrmE"/>
</dbReference>
<dbReference type="InterPro" id="IPR006073">
    <property type="entry name" value="GTP-bd"/>
</dbReference>
<dbReference type="InterPro" id="IPR018948">
    <property type="entry name" value="GTP-bd_TrmE_N"/>
</dbReference>
<dbReference type="InterPro" id="IPR004520">
    <property type="entry name" value="GTPase_MnmE"/>
</dbReference>
<dbReference type="InterPro" id="IPR027368">
    <property type="entry name" value="MnmE_dom2"/>
</dbReference>
<dbReference type="InterPro" id="IPR025867">
    <property type="entry name" value="MnmE_helical"/>
</dbReference>
<dbReference type="InterPro" id="IPR027417">
    <property type="entry name" value="P-loop_NTPase"/>
</dbReference>
<dbReference type="InterPro" id="IPR005225">
    <property type="entry name" value="Small_GTP-bd"/>
</dbReference>
<dbReference type="InterPro" id="IPR027266">
    <property type="entry name" value="TrmE/GcvT_dom1"/>
</dbReference>
<dbReference type="NCBIfam" id="TIGR00450">
    <property type="entry name" value="mnmE_trmE_thdF"/>
    <property type="match status" value="1"/>
</dbReference>
<dbReference type="NCBIfam" id="NF003661">
    <property type="entry name" value="PRK05291.1-3"/>
    <property type="match status" value="1"/>
</dbReference>
<dbReference type="NCBIfam" id="TIGR00231">
    <property type="entry name" value="small_GTP"/>
    <property type="match status" value="1"/>
</dbReference>
<dbReference type="PANTHER" id="PTHR42714">
    <property type="entry name" value="TRNA MODIFICATION GTPASE GTPBP3"/>
    <property type="match status" value="1"/>
</dbReference>
<dbReference type="PANTHER" id="PTHR42714:SF2">
    <property type="entry name" value="TRNA MODIFICATION GTPASE GTPBP3, MITOCHONDRIAL"/>
    <property type="match status" value="1"/>
</dbReference>
<dbReference type="Pfam" id="PF01926">
    <property type="entry name" value="MMR_HSR1"/>
    <property type="match status" value="1"/>
</dbReference>
<dbReference type="Pfam" id="PF12631">
    <property type="entry name" value="MnmE_helical"/>
    <property type="match status" value="1"/>
</dbReference>
<dbReference type="Pfam" id="PF10396">
    <property type="entry name" value="TrmE_N"/>
    <property type="match status" value="1"/>
</dbReference>
<dbReference type="PRINTS" id="PR00326">
    <property type="entry name" value="GTP1OBG"/>
</dbReference>
<dbReference type="SUPFAM" id="SSF52540">
    <property type="entry name" value="P-loop containing nucleoside triphosphate hydrolases"/>
    <property type="match status" value="1"/>
</dbReference>
<dbReference type="SUPFAM" id="SSF116878">
    <property type="entry name" value="TrmE connector domain"/>
    <property type="match status" value="1"/>
</dbReference>
<dbReference type="PROSITE" id="PS51709">
    <property type="entry name" value="G_TRME"/>
    <property type="match status" value="1"/>
</dbReference>
<keyword id="KW-0963">Cytoplasm</keyword>
<keyword id="KW-0342">GTP-binding</keyword>
<keyword id="KW-0378">Hydrolase</keyword>
<keyword id="KW-0460">Magnesium</keyword>
<keyword id="KW-0479">Metal-binding</keyword>
<keyword id="KW-0547">Nucleotide-binding</keyword>
<keyword id="KW-0630">Potassium</keyword>
<keyword id="KW-0819">tRNA processing</keyword>
<accession>A4IX14</accession>
<proteinExistence type="inferred from homology"/>
<feature type="chain" id="PRO_1000060046" description="tRNA modification GTPase MnmE">
    <location>
        <begin position="1"/>
        <end position="450"/>
    </location>
</feature>
<feature type="domain" description="TrmE-type G">
    <location>
        <begin position="214"/>
        <end position="374"/>
    </location>
</feature>
<feature type="binding site" evidence="1">
    <location>
        <position position="23"/>
    </location>
    <ligand>
        <name>(6S)-5-formyl-5,6,7,8-tetrahydrofolate</name>
        <dbReference type="ChEBI" id="CHEBI:57457"/>
    </ligand>
</feature>
<feature type="binding site" evidence="1">
    <location>
        <position position="79"/>
    </location>
    <ligand>
        <name>(6S)-5-formyl-5,6,7,8-tetrahydrofolate</name>
        <dbReference type="ChEBI" id="CHEBI:57457"/>
    </ligand>
</feature>
<feature type="binding site" evidence="1">
    <location>
        <position position="118"/>
    </location>
    <ligand>
        <name>(6S)-5-formyl-5,6,7,8-tetrahydrofolate</name>
        <dbReference type="ChEBI" id="CHEBI:57457"/>
    </ligand>
</feature>
<feature type="binding site" evidence="1">
    <location>
        <begin position="224"/>
        <end position="229"/>
    </location>
    <ligand>
        <name>GTP</name>
        <dbReference type="ChEBI" id="CHEBI:37565"/>
    </ligand>
</feature>
<feature type="binding site" evidence="1">
    <location>
        <position position="224"/>
    </location>
    <ligand>
        <name>K(+)</name>
        <dbReference type="ChEBI" id="CHEBI:29103"/>
    </ligand>
</feature>
<feature type="binding site" evidence="1">
    <location>
        <position position="228"/>
    </location>
    <ligand>
        <name>Mg(2+)</name>
        <dbReference type="ChEBI" id="CHEBI:18420"/>
    </ligand>
</feature>
<feature type="binding site" evidence="1">
    <location>
        <begin position="243"/>
        <end position="249"/>
    </location>
    <ligand>
        <name>GTP</name>
        <dbReference type="ChEBI" id="CHEBI:37565"/>
    </ligand>
</feature>
<feature type="binding site" evidence="1">
    <location>
        <position position="243"/>
    </location>
    <ligand>
        <name>K(+)</name>
        <dbReference type="ChEBI" id="CHEBI:29103"/>
    </ligand>
</feature>
<feature type="binding site" evidence="1">
    <location>
        <position position="245"/>
    </location>
    <ligand>
        <name>K(+)</name>
        <dbReference type="ChEBI" id="CHEBI:29103"/>
    </ligand>
</feature>
<feature type="binding site" evidence="1">
    <location>
        <position position="248"/>
    </location>
    <ligand>
        <name>K(+)</name>
        <dbReference type="ChEBI" id="CHEBI:29103"/>
    </ligand>
</feature>
<feature type="binding site" evidence="1">
    <location>
        <position position="249"/>
    </location>
    <ligand>
        <name>Mg(2+)</name>
        <dbReference type="ChEBI" id="CHEBI:18420"/>
    </ligand>
</feature>
<feature type="binding site" evidence="1">
    <location>
        <begin position="268"/>
        <end position="271"/>
    </location>
    <ligand>
        <name>GTP</name>
        <dbReference type="ChEBI" id="CHEBI:37565"/>
    </ligand>
</feature>
<feature type="binding site" evidence="1">
    <location>
        <position position="450"/>
    </location>
    <ligand>
        <name>(6S)-5-formyl-5,6,7,8-tetrahydrofolate</name>
        <dbReference type="ChEBI" id="CHEBI:57457"/>
    </ligand>
</feature>
<organism>
    <name type="scientific">Francisella tularensis subsp. tularensis (strain WY96-3418)</name>
    <dbReference type="NCBI Taxonomy" id="418136"/>
    <lineage>
        <taxon>Bacteria</taxon>
        <taxon>Pseudomonadati</taxon>
        <taxon>Pseudomonadota</taxon>
        <taxon>Gammaproteobacteria</taxon>
        <taxon>Thiotrichales</taxon>
        <taxon>Francisellaceae</taxon>
        <taxon>Francisella</taxon>
    </lineage>
</organism>